<reference key="1">
    <citation type="journal article" date="1987" name="Gene">
        <title>The extracellular nuclease gene of Serratia marcescens and its secretion from Escherichia coli.</title>
        <authorList>
            <person name="Ball T.K."/>
            <person name="Saurugger P.N."/>
            <person name="Benedick M.J."/>
        </authorList>
    </citation>
    <scope>NUCLEOTIDE SEQUENCE [GENOMIC DNA]</scope>
    <source>
        <strain>W225</strain>
    </source>
</reference>
<reference key="2">
    <citation type="submission" date="1989-10" db="EMBL/GenBank/DDBJ databases">
        <authorList>
            <person name="Benedick M.J."/>
        </authorList>
    </citation>
    <scope>SEQUENCE REVISION TO 7-11</scope>
</reference>
<reference key="3">
    <citation type="journal article" date="1989" name="Carlsberg Res. Commun.">
        <title>Purification and characterization of a Serratia marcescens nuclease produced by Escherichia coli.</title>
        <authorList>
            <person name="Biedermann K."/>
            <person name="Jepsen P.K."/>
            <person name="Riise E."/>
            <person name="Svendsen I."/>
        </authorList>
    </citation>
    <scope>PARTIAL PROTEIN SEQUENCE</scope>
    <scope>DISULFIDE BONDS</scope>
</reference>
<reference key="4">
    <citation type="journal article" date="1993" name="Biochim. Biophys. Acta">
        <title>Characterization of Serratia marcescens nuclease isoforms by plasma desorption mass spectrometry.</title>
        <authorList>
            <person name="Pedersen J."/>
            <person name="Filimonova M.N."/>
            <person name="Roepstorff P."/>
            <person name="Biedermann K."/>
        </authorList>
    </citation>
    <scope>IDENTIFICATION OF ISOFORMS SM1; SM2 AND SM3</scope>
    <scope>MASS SPECTROMETRY</scope>
    <scope>DISULFIDE BONDS</scope>
    <source>
        <strain>B10M1</strain>
    </source>
</reference>
<reference key="5">
    <citation type="journal article" date="1994" name="Nucleic Acids Res.">
        <title>Identification of catalytically relevant amino acids of the extracellular Serratia marcescens endonuclease by alignment-guided mutagenesis.</title>
        <authorList>
            <person name="Friedhoff P."/>
            <person name="Gimadutdinow O."/>
            <person name="Pingoud A."/>
        </authorList>
    </citation>
    <scope>ACTIVE SITE</scope>
</reference>
<reference key="6">
    <citation type="journal article" date="1994" name="Biochem. Mol. Biol. Int.">
        <title>Kinetic studies of the Serratia marcescens extracellular nuclease isoforms.</title>
        <authorList>
            <person name="Filimonova M.N."/>
            <person name="Krause K.L."/>
            <person name="Benedik M.J."/>
        </authorList>
    </citation>
    <scope>BIOPHYSICOCHEMICAL PROPERTIES</scope>
</reference>
<reference key="7">
    <citation type="journal article" date="1996" name="Nucleic Acids Res.">
        <title>Analysis of the mechanism of the Serratia nuclease using site-directed mutagenesis.</title>
        <authorList>
            <person name="Friedhoff P."/>
            <person name="Kolmes B."/>
            <person name="Gimadutdinow O."/>
            <person name="Wende W."/>
            <person name="Krause K.L."/>
            <person name="Pingoud A."/>
        </authorList>
    </citation>
    <scope>MUTAGENESIS OF ARG-78; ARG-108; HIS-110; ASN-140 AND GLU-148</scope>
</reference>
<reference key="8">
    <citation type="journal article" date="1998" name="FEMS Microbiol. Lett.">
        <title>Serratia marcescens and its extracellular nuclease.</title>
        <authorList>
            <person name="Benedik M.J."/>
            <person name="Strych U."/>
        </authorList>
    </citation>
    <scope>REVIEW</scope>
</reference>
<reference key="9">
    <citation type="journal article" date="1994" name="Nat. Struct. Biol.">
        <title>2.1-A structure of Serratia endonuclease suggests a mechanism for binding to double-stranded DNA.</title>
        <authorList>
            <person name="Miller M.D."/>
            <person name="Tanner J."/>
            <person name="Alpaugh M."/>
            <person name="Benedik M.J."/>
            <person name="Krause K.L."/>
        </authorList>
    </citation>
    <scope>X-RAY CRYSTALLOGRAPHY (2.1 ANGSTROMS) IN COMPLEX WITH MAGNESIUM IONS</scope>
    <scope>SUBUNIT</scope>
</reference>
<reference key="10">
    <citation type="journal article" date="1997" name="FEBS Lett.">
        <title>Three-dimensional structure of Serratia marcescens nuclease at 1.7-A resolution and mechanism of its action.</title>
        <authorList>
            <person name="Lunin V.Y."/>
            <person name="Levdikov V.M."/>
            <person name="Shlyapnikov S.V."/>
            <person name="Blagova E.V."/>
            <person name="Lunin V.V."/>
            <person name="Wilson K.S."/>
            <person name="Mikhailov A.M."/>
        </authorList>
    </citation>
    <scope>X-RAY CRYSTALLOGRAPHY (1.7 ANGSTROMS)</scope>
</reference>
<reference key="11">
    <citation type="journal article" date="2000" name="Acta Crystallogr. D">
        <title>Atomic structure of the Serratia marcescens endonuclease at 1.1 A resolution and the enzyme reaction mechanism.</title>
        <authorList>
            <person name="Shlyapnikov S.V."/>
            <person name="Lunin V.V."/>
            <person name="Perbandt M."/>
            <person name="Polyakov K.M."/>
            <person name="Lunin V.Y."/>
            <person name="Levdikov V.M."/>
            <person name="Betzel C."/>
            <person name="Mikhailov A.M."/>
        </authorList>
    </citation>
    <scope>X-RAY CRYSTALLOGRAPHY (1.1 ANGSTROMS) OF 22-266 IN COMPLEX WITH MAGNESIUM IONS</scope>
</reference>
<keyword id="KW-0002">3D-structure</keyword>
<keyword id="KW-0903">Direct protein sequencing</keyword>
<keyword id="KW-1015">Disulfide bond</keyword>
<keyword id="KW-0255">Endonuclease</keyword>
<keyword id="KW-0378">Hydrolase</keyword>
<keyword id="KW-0460">Magnesium</keyword>
<keyword id="KW-0479">Metal-binding</keyword>
<keyword id="KW-0540">Nuclease</keyword>
<keyword id="KW-0964">Secreted</keyword>
<keyword id="KW-0732">Signal</keyword>
<gene>
    <name type="primary">nucA</name>
    <name type="synonym">nuc</name>
</gene>
<protein>
    <recommendedName>
        <fullName>Nuclease</fullName>
        <ecNumber>3.1.30.2</ecNumber>
    </recommendedName>
    <alternativeName>
        <fullName>Endonuclease</fullName>
    </alternativeName>
    <component>
        <recommendedName>
            <fullName>Nuclease isoform Sm2</fullName>
        </recommendedName>
    </component>
    <component>
        <recommendedName>
            <fullName>Nuclease isoform Sm3</fullName>
        </recommendedName>
    </component>
    <component>
        <recommendedName>
            <fullName>Nuclease isoform Sm1</fullName>
        </recommendedName>
    </component>
</protein>
<comment type="function">
    <text>Catalyzes the hydrolysis of both DNA and RNA, double- or single-stranded, at the 3'position of the phosphodiester bond to produce 5'-phosphorylated mono-, di-, tri- and tetranucleotides. DNA is a slightly better substrate than RNA.</text>
</comment>
<comment type="catalytic activity">
    <reaction evidence="1">
        <text>Endonucleolytic cleavage to 5'-phosphomononucleotide and 5'-phosphooligonucleotide end-products.</text>
        <dbReference type="EC" id="3.1.30.2"/>
    </reaction>
</comment>
<comment type="cofactor">
    <cofactor>
        <name>Mg(2+)</name>
        <dbReference type="ChEBI" id="CHEBI:18420"/>
    </cofactor>
    <text>Binds 1 Mg(2+) ion.</text>
</comment>
<comment type="subunit">
    <text evidence="2 3">Homodimer.</text>
</comment>
<comment type="subcellular location">
    <subcellularLocation>
        <location>Secreted</location>
    </subcellularLocation>
</comment>
<comment type="mass spectrometry">
    <molecule>Nuclease isoform Sm2</molecule>
    <text>Isoform Sm2.</text>
</comment>
<comment type="mass spectrometry">
    <molecule>Nuclease isoform Sm3</molecule>
    <text>Isoform Sm3.</text>
</comment>
<comment type="mass spectrometry">
    <molecule>Nuclease isoform Sm1</molecule>
    <text>Isoform Sm1.</text>
</comment>
<comment type="miscellaneous">
    <text>The active site contains 1 hydrated magnesium ion that has only 1 direct interaction with the protein; all other interactions are via water molecules.</text>
</comment>
<comment type="similarity">
    <text evidence="7">Belongs to the DNA/RNA non-specific endonuclease family.</text>
</comment>
<organism>
    <name type="scientific">Serratia marcescens</name>
    <dbReference type="NCBI Taxonomy" id="615"/>
    <lineage>
        <taxon>Bacteria</taxon>
        <taxon>Pseudomonadati</taxon>
        <taxon>Pseudomonadota</taxon>
        <taxon>Gammaproteobacteria</taxon>
        <taxon>Enterobacterales</taxon>
        <taxon>Yersiniaceae</taxon>
        <taxon>Serratia</taxon>
    </lineage>
</organism>
<dbReference type="EC" id="3.1.30.2"/>
<dbReference type="EMBL" id="M19495">
    <property type="protein sequence ID" value="AAA26560.1"/>
    <property type="molecule type" value="Genomic_DNA"/>
</dbReference>
<dbReference type="RefSeq" id="WP_015377376.1">
    <property type="nucleotide sequence ID" value="NZ_WVHX01000034.1"/>
</dbReference>
<dbReference type="PDB" id="1G8T">
    <property type="method" value="X-ray"/>
    <property type="resolution" value="1.10 A"/>
    <property type="chains" value="A/B=22-266"/>
</dbReference>
<dbReference type="PDB" id="1QAE">
    <property type="method" value="X-ray"/>
    <property type="resolution" value="2.05 A"/>
    <property type="chains" value="A/B=22-266"/>
</dbReference>
<dbReference type="PDB" id="1QL0">
    <property type="method" value="X-ray"/>
    <property type="resolution" value="1.10 A"/>
    <property type="chains" value="A/B=26-266"/>
</dbReference>
<dbReference type="PDB" id="1SMN">
    <property type="method" value="X-ray"/>
    <property type="resolution" value="2.04 A"/>
    <property type="chains" value="A/B=22-266"/>
</dbReference>
<dbReference type="PDB" id="4E3Y">
    <property type="method" value="X-ray"/>
    <property type="resolution" value="0.95 A"/>
    <property type="chains" value="A/B=22-266"/>
</dbReference>
<dbReference type="PDBsum" id="1G8T"/>
<dbReference type="PDBsum" id="1QAE"/>
<dbReference type="PDBsum" id="1QL0"/>
<dbReference type="PDBsum" id="1SMN"/>
<dbReference type="PDBsum" id="4E3Y"/>
<dbReference type="SMR" id="P13717"/>
<dbReference type="STRING" id="273526.SMDB11_1061"/>
<dbReference type="OrthoDB" id="9811262at2"/>
<dbReference type="BRENDA" id="3.1.30.2">
    <property type="organism ID" value="5690"/>
</dbReference>
<dbReference type="EvolutionaryTrace" id="P13717"/>
<dbReference type="GO" id="GO:0005576">
    <property type="term" value="C:extracellular region"/>
    <property type="evidence" value="ECO:0007669"/>
    <property type="project" value="UniProtKB-SubCell"/>
</dbReference>
<dbReference type="GO" id="GO:0004519">
    <property type="term" value="F:endonuclease activity"/>
    <property type="evidence" value="ECO:0007669"/>
    <property type="project" value="UniProtKB-KW"/>
</dbReference>
<dbReference type="GO" id="GO:0046872">
    <property type="term" value="F:metal ion binding"/>
    <property type="evidence" value="ECO:0007669"/>
    <property type="project" value="UniProtKB-KW"/>
</dbReference>
<dbReference type="GO" id="GO:0003676">
    <property type="term" value="F:nucleic acid binding"/>
    <property type="evidence" value="ECO:0007669"/>
    <property type="project" value="InterPro"/>
</dbReference>
<dbReference type="CDD" id="cd00091">
    <property type="entry name" value="NUC"/>
    <property type="match status" value="1"/>
</dbReference>
<dbReference type="Gene3D" id="3.40.570.10">
    <property type="entry name" value="Extracellular Endonuclease, subunit A"/>
    <property type="match status" value="1"/>
</dbReference>
<dbReference type="InterPro" id="IPR018524">
    <property type="entry name" value="DNA/RNA_endonuclease_AS"/>
</dbReference>
<dbReference type="InterPro" id="IPR044929">
    <property type="entry name" value="DNA/RNA_non-sp_Endonuclease_sf"/>
</dbReference>
<dbReference type="InterPro" id="IPR001604">
    <property type="entry name" value="Endo_G_ENPP1-like_dom"/>
</dbReference>
<dbReference type="InterPro" id="IPR020821">
    <property type="entry name" value="ENPP1-3/EXOG-like_nuc-like"/>
</dbReference>
<dbReference type="InterPro" id="IPR044925">
    <property type="entry name" value="His-Me_finger_sf"/>
</dbReference>
<dbReference type="InterPro" id="IPR040255">
    <property type="entry name" value="Non-specific_endonuclease"/>
</dbReference>
<dbReference type="PANTHER" id="PTHR13966:SF5">
    <property type="entry name" value="ENDONUCLEASE G, MITOCHONDRIAL"/>
    <property type="match status" value="1"/>
</dbReference>
<dbReference type="PANTHER" id="PTHR13966">
    <property type="entry name" value="ENDONUCLEASE RELATED"/>
    <property type="match status" value="1"/>
</dbReference>
<dbReference type="Pfam" id="PF01223">
    <property type="entry name" value="Endonuclease_NS"/>
    <property type="match status" value="1"/>
</dbReference>
<dbReference type="SMART" id="SM00892">
    <property type="entry name" value="Endonuclease_NS"/>
    <property type="match status" value="1"/>
</dbReference>
<dbReference type="SMART" id="SM00477">
    <property type="entry name" value="NUC"/>
    <property type="match status" value="1"/>
</dbReference>
<dbReference type="SUPFAM" id="SSF54060">
    <property type="entry name" value="His-Me finger endonucleases"/>
    <property type="match status" value="1"/>
</dbReference>
<dbReference type="PROSITE" id="PS01070">
    <property type="entry name" value="NUCLEASE_NON_SPEC"/>
    <property type="match status" value="1"/>
</dbReference>
<accession>P13717</accession>
<feature type="signal peptide">
    <location>
        <begin position="1"/>
        <end position="21"/>
    </location>
</feature>
<feature type="chain" id="PRO_0000019914" description="Nuclease isoform Sm2">
    <location>
        <begin position="22"/>
        <end position="266"/>
    </location>
</feature>
<feature type="chain" id="PRO_0000019915" description="Nuclease isoform Sm3">
    <location>
        <begin position="23"/>
        <end position="266"/>
    </location>
</feature>
<feature type="chain" id="PRO_0000019916" description="Nuclease isoform Sm1">
    <location>
        <begin position="25"/>
        <end position="266"/>
    </location>
</feature>
<feature type="active site" description="Proton acceptor" evidence="1 4">
    <location>
        <position position="110"/>
    </location>
</feature>
<feature type="binding site">
    <location>
        <position position="140"/>
    </location>
    <ligand>
        <name>Mg(2+)</name>
        <dbReference type="ChEBI" id="CHEBI:18420"/>
        <note>catalytic</note>
    </ligand>
</feature>
<feature type="disulfide bond">
    <location>
        <begin position="30"/>
        <end position="34"/>
    </location>
</feature>
<feature type="disulfide bond">
    <location>
        <begin position="222"/>
        <end position="264"/>
    </location>
</feature>
<feature type="mutagenesis site" description="Reduced activity 1000-fold." evidence="6">
    <original>R</original>
    <variation>A</variation>
    <location>
        <position position="78"/>
    </location>
</feature>
<feature type="mutagenesis site" description="Reduced activity 100-fold." evidence="6">
    <original>R</original>
    <variation>K</variation>
    <location>
        <position position="78"/>
    </location>
</feature>
<feature type="mutagenesis site" description="Reduced activity 1000-fold." evidence="6">
    <original>R</original>
    <variation>A</variation>
    <location>
        <position position="108"/>
    </location>
</feature>
<feature type="mutagenesis site" description="Reduced activity 50-fold." evidence="6">
    <original>R</original>
    <variation>K</variation>
    <location>
        <position position="108"/>
    </location>
</feature>
<feature type="mutagenesis site" description="Reduced activity 100000-fold." evidence="6">
    <original>H</original>
    <variation>A</variation>
    <variation>D</variation>
    <variation>E</variation>
    <variation>K</variation>
    <variation>Q</variation>
    <location>
        <position position="110"/>
    </location>
</feature>
<feature type="mutagenesis site" description="Reduced activity 1000-fold." evidence="6">
    <original>H</original>
    <variation>N</variation>
    <location>
        <position position="110"/>
    </location>
</feature>
<feature type="mutagenesis site" description="Reduced activity over 10000-fold." evidence="6">
    <original>N</original>
    <variation>A</variation>
    <variation>D</variation>
    <variation>H</variation>
    <location>
        <position position="140"/>
    </location>
</feature>
<feature type="mutagenesis site" description="Reduced activity 1000-fold." evidence="6">
    <original>N</original>
    <variation>Q</variation>
    <location>
        <position position="140"/>
    </location>
</feature>
<feature type="mutagenesis site" description="Reduced activity over 800-fold." evidence="6">
    <original>E</original>
    <variation>A</variation>
    <variation>D</variation>
    <variation>Q</variation>
    <location>
        <position position="148"/>
    </location>
</feature>
<feature type="strand" evidence="9">
    <location>
        <begin position="29"/>
        <end position="32"/>
    </location>
</feature>
<feature type="strand" evidence="8">
    <location>
        <begin position="39"/>
        <end position="42"/>
    </location>
</feature>
<feature type="strand" evidence="9">
    <location>
        <begin position="50"/>
        <end position="53"/>
    </location>
</feature>
<feature type="turn" evidence="9">
    <location>
        <begin position="55"/>
        <end position="57"/>
    </location>
</feature>
<feature type="strand" evidence="9">
    <location>
        <begin position="58"/>
        <end position="67"/>
    </location>
</feature>
<feature type="helix" evidence="9">
    <location>
        <begin position="88"/>
        <end position="90"/>
    </location>
</feature>
<feature type="helix" evidence="9">
    <location>
        <begin position="94"/>
        <end position="97"/>
    </location>
</feature>
<feature type="helix" evidence="9">
    <location>
        <begin position="100"/>
        <end position="104"/>
    </location>
</feature>
<feature type="strand" evidence="9">
    <location>
        <begin position="106"/>
        <end position="112"/>
    </location>
</feature>
<feature type="helix" evidence="9">
    <location>
        <begin position="114"/>
        <end position="117"/>
    </location>
</feature>
<feature type="helix" evidence="9">
    <location>
        <begin position="123"/>
        <end position="127"/>
    </location>
</feature>
<feature type="helix" evidence="9">
    <location>
        <begin position="129"/>
        <end position="131"/>
    </location>
</feature>
<feature type="strand" evidence="9">
    <location>
        <begin position="132"/>
        <end position="136"/>
    </location>
</feature>
<feature type="helix" evidence="9">
    <location>
        <begin position="137"/>
        <end position="140"/>
    </location>
</feature>
<feature type="helix" evidence="9">
    <location>
        <begin position="143"/>
        <end position="153"/>
    </location>
</feature>
<feature type="helix" evidence="9">
    <location>
        <begin position="154"/>
        <end position="156"/>
    </location>
</feature>
<feature type="strand" evidence="9">
    <location>
        <begin position="163"/>
        <end position="170"/>
    </location>
</feature>
<feature type="strand" evidence="9">
    <location>
        <begin position="189"/>
        <end position="197"/>
    </location>
</feature>
<feature type="turn" evidence="9">
    <location>
        <begin position="201"/>
        <end position="203"/>
    </location>
</feature>
<feature type="strand" evidence="9">
    <location>
        <begin position="206"/>
        <end position="212"/>
    </location>
</feature>
<feature type="helix" evidence="9">
    <location>
        <begin position="221"/>
        <end position="224"/>
    </location>
</feature>
<feature type="helix" evidence="9">
    <location>
        <begin position="228"/>
        <end position="235"/>
    </location>
</feature>
<feature type="strand" evidence="9">
    <location>
        <begin position="238"/>
        <end position="240"/>
    </location>
</feature>
<feature type="helix" evidence="9">
    <location>
        <begin position="245"/>
        <end position="251"/>
    </location>
</feature>
<feature type="helix" evidence="9">
    <location>
        <begin position="258"/>
        <end position="261"/>
    </location>
</feature>
<sequence>MRFNNKMLALAALLFAAQASADTLESIDNCAVGCPTGGSSNVSIVRHAYTLNNNSTTKFANWVAYHITKDTPASGKTRNWKTDPALNPADTLAPADYTGANAALKVDRGHQAPLASLAGVSDWESLNYLSNITPQKSDLNQGAWARLEDQERKLIDRADISSVYTVTGPLYERDMGKLPGTQKAHTIPSAYWKVIFINNSPAVNHYAAFLFDQNTPKGADFCQFRVTVDEIEKRTGLIIWAGLPDDVQASLKSKPGVLPELMGCKN</sequence>
<evidence type="ECO:0000255" key="1">
    <source>
        <dbReference type="PROSITE-ProRule" id="PRU10047"/>
    </source>
</evidence>
<evidence type="ECO:0000269" key="2">
    <source>
    </source>
</evidence>
<evidence type="ECO:0000269" key="3">
    <source>
    </source>
</evidence>
<evidence type="ECO:0000269" key="4">
    <source>
    </source>
</evidence>
<evidence type="ECO:0000269" key="5">
    <source>
    </source>
</evidence>
<evidence type="ECO:0000269" key="6">
    <source>
    </source>
</evidence>
<evidence type="ECO:0000305" key="7"/>
<evidence type="ECO:0007829" key="8">
    <source>
        <dbReference type="PDB" id="1QAE"/>
    </source>
</evidence>
<evidence type="ECO:0007829" key="9">
    <source>
        <dbReference type="PDB" id="4E3Y"/>
    </source>
</evidence>
<name>NUCA_SERMA</name>
<proteinExistence type="evidence at protein level"/>